<feature type="chain" id="PRO_0000168330" description="L-lactate dehydrogenase 1">
    <location>
        <begin position="1"/>
        <end position="316"/>
    </location>
</feature>
<feature type="active site" description="Proton acceptor" evidence="1">
    <location>
        <position position="179"/>
    </location>
</feature>
<feature type="binding site" evidence="1">
    <location>
        <position position="17"/>
    </location>
    <ligand>
        <name>NAD(+)</name>
        <dbReference type="ChEBI" id="CHEBI:57540"/>
    </ligand>
</feature>
<feature type="binding site" evidence="1">
    <location>
        <position position="38"/>
    </location>
    <ligand>
        <name>NAD(+)</name>
        <dbReference type="ChEBI" id="CHEBI:57540"/>
    </ligand>
</feature>
<feature type="binding site" evidence="1">
    <location>
        <position position="43"/>
    </location>
    <ligand>
        <name>NAD(+)</name>
        <dbReference type="ChEBI" id="CHEBI:57540"/>
    </ligand>
</feature>
<feature type="binding site" evidence="1">
    <location>
        <position position="69"/>
    </location>
    <ligand>
        <name>NAD(+)</name>
        <dbReference type="ChEBI" id="CHEBI:57540"/>
    </ligand>
</feature>
<feature type="binding site" evidence="1">
    <location>
        <position position="92"/>
    </location>
    <ligand>
        <name>substrate</name>
    </ligand>
</feature>
<feature type="binding site" evidence="1">
    <location>
        <begin position="122"/>
        <end position="124"/>
    </location>
    <ligand>
        <name>NAD(+)</name>
        <dbReference type="ChEBI" id="CHEBI:57540"/>
    </ligand>
</feature>
<feature type="binding site" evidence="1">
    <location>
        <begin position="124"/>
        <end position="127"/>
    </location>
    <ligand>
        <name>substrate</name>
    </ligand>
</feature>
<feature type="binding site" evidence="1">
    <location>
        <position position="147"/>
    </location>
    <ligand>
        <name>NAD(+)</name>
        <dbReference type="ChEBI" id="CHEBI:57540"/>
    </ligand>
</feature>
<feature type="binding site" evidence="1">
    <location>
        <begin position="152"/>
        <end position="155"/>
    </location>
    <ligand>
        <name>substrate</name>
    </ligand>
</feature>
<feature type="binding site" evidence="1">
    <location>
        <position position="234"/>
    </location>
    <ligand>
        <name>substrate</name>
    </ligand>
</feature>
<reference key="1">
    <citation type="journal article" date="2002" name="Proc. Natl. Acad. Sci. U.S.A.">
        <title>The genome sequence of Bifidobacterium longum reflects its adaptation to the human gastrointestinal tract.</title>
        <authorList>
            <person name="Schell M.A."/>
            <person name="Karmirantzou M."/>
            <person name="Snel B."/>
            <person name="Vilanova D."/>
            <person name="Berger B."/>
            <person name="Pessi G."/>
            <person name="Zwahlen M.-C."/>
            <person name="Desiere F."/>
            <person name="Bork P."/>
            <person name="Delley M."/>
            <person name="Pridmore R.D."/>
            <person name="Arigoni F."/>
        </authorList>
    </citation>
    <scope>NUCLEOTIDE SEQUENCE [LARGE SCALE GENOMIC DNA]</scope>
    <source>
        <strain>NCC 2705</strain>
    </source>
</reference>
<accession>P59050</accession>
<evidence type="ECO:0000255" key="1">
    <source>
        <dbReference type="HAMAP-Rule" id="MF_00488"/>
    </source>
</evidence>
<evidence type="ECO:0000305" key="2"/>
<keyword id="KW-0963">Cytoplasm</keyword>
<keyword id="KW-0520">NAD</keyword>
<keyword id="KW-0560">Oxidoreductase</keyword>
<keyword id="KW-1185">Reference proteome</keyword>
<gene>
    <name evidence="1" type="primary">ldh1</name>
    <name type="ordered locus">BL0710</name>
</gene>
<dbReference type="EC" id="1.1.1.27" evidence="1"/>
<dbReference type="EMBL" id="AE014295">
    <property type="protein sequence ID" value="AAN24529.1"/>
    <property type="molecule type" value="Genomic_DNA"/>
</dbReference>
<dbReference type="RefSeq" id="NP_695893.1">
    <property type="nucleotide sequence ID" value="NC_004307.2"/>
</dbReference>
<dbReference type="RefSeq" id="WP_007056108.1">
    <property type="nucleotide sequence ID" value="NC_004307.2"/>
</dbReference>
<dbReference type="SMR" id="P59050"/>
<dbReference type="STRING" id="206672.BL0710"/>
<dbReference type="EnsemblBacteria" id="AAN24529">
    <property type="protein sequence ID" value="AAN24529"/>
    <property type="gene ID" value="BL0710"/>
</dbReference>
<dbReference type="KEGG" id="blo:BL0710"/>
<dbReference type="PATRIC" id="fig|206672.9.peg.409"/>
<dbReference type="HOGENOM" id="CLU_045401_1_2_11"/>
<dbReference type="OrthoDB" id="9802969at2"/>
<dbReference type="PhylomeDB" id="P59050"/>
<dbReference type="UniPathway" id="UPA00554">
    <property type="reaction ID" value="UER00611"/>
</dbReference>
<dbReference type="Proteomes" id="UP000000439">
    <property type="component" value="Chromosome"/>
</dbReference>
<dbReference type="GO" id="GO:0005737">
    <property type="term" value="C:cytoplasm"/>
    <property type="evidence" value="ECO:0007669"/>
    <property type="project" value="UniProtKB-SubCell"/>
</dbReference>
<dbReference type="GO" id="GO:0004459">
    <property type="term" value="F:L-lactate dehydrogenase activity"/>
    <property type="evidence" value="ECO:0007669"/>
    <property type="project" value="UniProtKB-UniRule"/>
</dbReference>
<dbReference type="GO" id="GO:0006096">
    <property type="term" value="P:glycolytic process"/>
    <property type="evidence" value="ECO:0007669"/>
    <property type="project" value="UniProtKB-UniRule"/>
</dbReference>
<dbReference type="GO" id="GO:0006089">
    <property type="term" value="P:lactate metabolic process"/>
    <property type="evidence" value="ECO:0007669"/>
    <property type="project" value="TreeGrafter"/>
</dbReference>
<dbReference type="CDD" id="cd05291">
    <property type="entry name" value="HicDH_like"/>
    <property type="match status" value="1"/>
</dbReference>
<dbReference type="Gene3D" id="3.90.110.10">
    <property type="entry name" value="Lactate dehydrogenase/glycoside hydrolase, family 4, C-terminal"/>
    <property type="match status" value="1"/>
</dbReference>
<dbReference type="Gene3D" id="3.40.50.720">
    <property type="entry name" value="NAD(P)-binding Rossmann-like Domain"/>
    <property type="match status" value="1"/>
</dbReference>
<dbReference type="HAMAP" id="MF_00488">
    <property type="entry name" value="Lactate_dehydrog"/>
    <property type="match status" value="1"/>
</dbReference>
<dbReference type="InterPro" id="IPR001557">
    <property type="entry name" value="L-lactate/malate_DH"/>
</dbReference>
<dbReference type="InterPro" id="IPR011304">
    <property type="entry name" value="L-lactate_DH"/>
</dbReference>
<dbReference type="InterPro" id="IPR018177">
    <property type="entry name" value="L-lactate_DH_AS"/>
</dbReference>
<dbReference type="InterPro" id="IPR022383">
    <property type="entry name" value="Lactate/malate_DH_C"/>
</dbReference>
<dbReference type="InterPro" id="IPR001236">
    <property type="entry name" value="Lactate/malate_DH_N"/>
</dbReference>
<dbReference type="InterPro" id="IPR015955">
    <property type="entry name" value="Lactate_DH/Glyco_Ohase_4_C"/>
</dbReference>
<dbReference type="InterPro" id="IPR036291">
    <property type="entry name" value="NAD(P)-bd_dom_sf"/>
</dbReference>
<dbReference type="NCBIfam" id="TIGR01771">
    <property type="entry name" value="L-LDH-NAD"/>
    <property type="match status" value="1"/>
</dbReference>
<dbReference type="NCBIfam" id="NF000824">
    <property type="entry name" value="PRK00066.1"/>
    <property type="match status" value="1"/>
</dbReference>
<dbReference type="PANTHER" id="PTHR43128">
    <property type="entry name" value="L-2-HYDROXYCARBOXYLATE DEHYDROGENASE (NAD(P)(+))"/>
    <property type="match status" value="1"/>
</dbReference>
<dbReference type="PANTHER" id="PTHR43128:SF31">
    <property type="entry name" value="L-LACTATE DEHYDROGENASE"/>
    <property type="match status" value="1"/>
</dbReference>
<dbReference type="Pfam" id="PF02866">
    <property type="entry name" value="Ldh_1_C"/>
    <property type="match status" value="1"/>
</dbReference>
<dbReference type="Pfam" id="PF00056">
    <property type="entry name" value="Ldh_1_N"/>
    <property type="match status" value="1"/>
</dbReference>
<dbReference type="PIRSF" id="PIRSF000102">
    <property type="entry name" value="Lac_mal_DH"/>
    <property type="match status" value="1"/>
</dbReference>
<dbReference type="PRINTS" id="PR00086">
    <property type="entry name" value="LLDHDRGNASE"/>
</dbReference>
<dbReference type="SUPFAM" id="SSF56327">
    <property type="entry name" value="LDH C-terminal domain-like"/>
    <property type="match status" value="1"/>
</dbReference>
<dbReference type="SUPFAM" id="SSF51735">
    <property type="entry name" value="NAD(P)-binding Rossmann-fold domains"/>
    <property type="match status" value="1"/>
</dbReference>
<dbReference type="PROSITE" id="PS00064">
    <property type="entry name" value="L_LDH"/>
    <property type="match status" value="1"/>
</dbReference>
<comment type="function">
    <text evidence="1">Catalyzes the conversion of lactate to pyruvate.</text>
</comment>
<comment type="catalytic activity">
    <reaction evidence="1">
        <text>(S)-lactate + NAD(+) = pyruvate + NADH + H(+)</text>
        <dbReference type="Rhea" id="RHEA:23444"/>
        <dbReference type="ChEBI" id="CHEBI:15361"/>
        <dbReference type="ChEBI" id="CHEBI:15378"/>
        <dbReference type="ChEBI" id="CHEBI:16651"/>
        <dbReference type="ChEBI" id="CHEBI:57540"/>
        <dbReference type="ChEBI" id="CHEBI:57945"/>
        <dbReference type="EC" id="1.1.1.27"/>
    </reaction>
</comment>
<comment type="pathway">
    <text evidence="1">Fermentation; pyruvate fermentation to lactate; (S)-lactate from pyruvate: step 1/1.</text>
</comment>
<comment type="subunit">
    <text evidence="1">Homotetramer.</text>
</comment>
<comment type="subcellular location">
    <subcellularLocation>
        <location evidence="1">Cytoplasm</location>
    </subcellularLocation>
</comment>
<comment type="similarity">
    <text evidence="1 2">Belongs to the LDH/MDH superfamily. LDH family.</text>
</comment>
<sequence length="316" mass="33871">MVTMNRNKVVIVGTGQVGATAAFGIVTHGLCNELVLIDCSAAKALGEARDLDDGSEFQDRHVKVRAGDYADCKDADIVVITVGRKPPANSNRMAELGFTVGLVGEVVDNVMASGFDGVIVMVSNPVDVMAWYAWKRSGLPRTQVLGTGTALDTSRLKTIIGEETGLDPRNVGGFVMGEHGDSQFTAWSTVSLGGKPFARFLADNQDRFASVSTTEIEEKTRTRGNEIVAAKGGTNFGIASTVAGIVQTILWDERRIVPVSTLLDGEYGEHDVFLGVPTELRANGANEIVELDLSEDERAKLHHSAELVREHCEGLL</sequence>
<proteinExistence type="inferred from homology"/>
<organism>
    <name type="scientific">Bifidobacterium longum (strain NCC 2705)</name>
    <dbReference type="NCBI Taxonomy" id="206672"/>
    <lineage>
        <taxon>Bacteria</taxon>
        <taxon>Bacillati</taxon>
        <taxon>Actinomycetota</taxon>
        <taxon>Actinomycetes</taxon>
        <taxon>Bifidobacteriales</taxon>
        <taxon>Bifidobacteriaceae</taxon>
        <taxon>Bifidobacterium</taxon>
    </lineage>
</organism>
<protein>
    <recommendedName>
        <fullName evidence="1">L-lactate dehydrogenase 1</fullName>
        <shortName evidence="1">L-LDH 1</shortName>
        <ecNumber evidence="1">1.1.1.27</ecNumber>
    </recommendedName>
</protein>
<name>LDH1_BIFLO</name>